<dbReference type="EMBL" id="AP008957">
    <property type="protein sequence ID" value="BAH32578.1"/>
    <property type="molecule type" value="Genomic_DNA"/>
</dbReference>
<dbReference type="RefSeq" id="WP_003940718.1">
    <property type="nucleotide sequence ID" value="NC_012490.1"/>
</dbReference>
<dbReference type="SMR" id="C0ZW43"/>
<dbReference type="GeneID" id="93803287"/>
<dbReference type="KEGG" id="rer:RER_18700"/>
<dbReference type="eggNOG" id="COG0098">
    <property type="taxonomic scope" value="Bacteria"/>
</dbReference>
<dbReference type="HOGENOM" id="CLU_065898_1_0_11"/>
<dbReference type="Proteomes" id="UP000002204">
    <property type="component" value="Chromosome"/>
</dbReference>
<dbReference type="GO" id="GO:0015935">
    <property type="term" value="C:small ribosomal subunit"/>
    <property type="evidence" value="ECO:0007669"/>
    <property type="project" value="InterPro"/>
</dbReference>
<dbReference type="GO" id="GO:0019843">
    <property type="term" value="F:rRNA binding"/>
    <property type="evidence" value="ECO:0007669"/>
    <property type="project" value="UniProtKB-UniRule"/>
</dbReference>
<dbReference type="GO" id="GO:0003735">
    <property type="term" value="F:structural constituent of ribosome"/>
    <property type="evidence" value="ECO:0007669"/>
    <property type="project" value="InterPro"/>
</dbReference>
<dbReference type="GO" id="GO:0006412">
    <property type="term" value="P:translation"/>
    <property type="evidence" value="ECO:0007669"/>
    <property type="project" value="UniProtKB-UniRule"/>
</dbReference>
<dbReference type="FunFam" id="3.30.160.20:FF:000001">
    <property type="entry name" value="30S ribosomal protein S5"/>
    <property type="match status" value="1"/>
</dbReference>
<dbReference type="FunFam" id="3.30.230.10:FF:000002">
    <property type="entry name" value="30S ribosomal protein S5"/>
    <property type="match status" value="1"/>
</dbReference>
<dbReference type="Gene3D" id="3.30.160.20">
    <property type="match status" value="1"/>
</dbReference>
<dbReference type="Gene3D" id="3.30.230.10">
    <property type="match status" value="1"/>
</dbReference>
<dbReference type="HAMAP" id="MF_01307_B">
    <property type="entry name" value="Ribosomal_uS5_B"/>
    <property type="match status" value="1"/>
</dbReference>
<dbReference type="InterPro" id="IPR020568">
    <property type="entry name" value="Ribosomal_Su5_D2-typ_SF"/>
</dbReference>
<dbReference type="InterPro" id="IPR000851">
    <property type="entry name" value="Ribosomal_uS5"/>
</dbReference>
<dbReference type="InterPro" id="IPR005712">
    <property type="entry name" value="Ribosomal_uS5_bac-type"/>
</dbReference>
<dbReference type="InterPro" id="IPR005324">
    <property type="entry name" value="Ribosomal_uS5_C"/>
</dbReference>
<dbReference type="InterPro" id="IPR013810">
    <property type="entry name" value="Ribosomal_uS5_N"/>
</dbReference>
<dbReference type="InterPro" id="IPR018192">
    <property type="entry name" value="Ribosomal_uS5_N_CS"/>
</dbReference>
<dbReference type="InterPro" id="IPR014721">
    <property type="entry name" value="Ribsml_uS5_D2-typ_fold_subgr"/>
</dbReference>
<dbReference type="NCBIfam" id="TIGR01021">
    <property type="entry name" value="rpsE_bact"/>
    <property type="match status" value="1"/>
</dbReference>
<dbReference type="PANTHER" id="PTHR48277">
    <property type="entry name" value="MITOCHONDRIAL RIBOSOMAL PROTEIN S5"/>
    <property type="match status" value="1"/>
</dbReference>
<dbReference type="PANTHER" id="PTHR48277:SF1">
    <property type="entry name" value="MITOCHONDRIAL RIBOSOMAL PROTEIN S5"/>
    <property type="match status" value="1"/>
</dbReference>
<dbReference type="Pfam" id="PF00333">
    <property type="entry name" value="Ribosomal_S5"/>
    <property type="match status" value="1"/>
</dbReference>
<dbReference type="Pfam" id="PF03719">
    <property type="entry name" value="Ribosomal_S5_C"/>
    <property type="match status" value="1"/>
</dbReference>
<dbReference type="SUPFAM" id="SSF54768">
    <property type="entry name" value="dsRNA-binding domain-like"/>
    <property type="match status" value="1"/>
</dbReference>
<dbReference type="SUPFAM" id="SSF54211">
    <property type="entry name" value="Ribosomal protein S5 domain 2-like"/>
    <property type="match status" value="1"/>
</dbReference>
<dbReference type="PROSITE" id="PS00585">
    <property type="entry name" value="RIBOSOMAL_S5"/>
    <property type="match status" value="1"/>
</dbReference>
<dbReference type="PROSITE" id="PS50881">
    <property type="entry name" value="S5_DSRBD"/>
    <property type="match status" value="1"/>
</dbReference>
<sequence length="223" mass="22781">MPGRQRRDGGSGPAGQNGPNSGDNSNARGDNRGGGRDRRDGGRGGNAAEKSQFIERVVTINRVSKVVKGGRRFSFTALVIVGDGNGLVGVGYGKAKEVPAAIQKGVEEARKSFFRVPMIANTITHPVQGEAAAGIVMLRPASPGTGVIAGGAVRAVLECAGIADILSKSLGSDNAINVVHATVAALKGLQRPEEVAARRGLTLEEVAPAGMLRARAQAAGSVK</sequence>
<comment type="function">
    <text evidence="1">With S4 and S12 plays an important role in translational accuracy.</text>
</comment>
<comment type="function">
    <text evidence="1">Located at the back of the 30S subunit body where it stabilizes the conformation of the head with respect to the body.</text>
</comment>
<comment type="subunit">
    <text evidence="1">Part of the 30S ribosomal subunit. Contacts proteins S4 and S8.</text>
</comment>
<comment type="domain">
    <text>The N-terminal domain interacts with the head of the 30S subunit; the C-terminal domain interacts with the body and contacts protein S4. The interaction surface between S4 and S5 is involved in control of translational fidelity.</text>
</comment>
<comment type="similarity">
    <text evidence="1">Belongs to the universal ribosomal protein uS5 family.</text>
</comment>
<feature type="chain" id="PRO_1000214323" description="Small ribosomal subunit protein uS5">
    <location>
        <begin position="1"/>
        <end position="223"/>
    </location>
</feature>
<feature type="domain" description="S5 DRBM" evidence="1">
    <location>
        <begin position="53"/>
        <end position="116"/>
    </location>
</feature>
<feature type="region of interest" description="Disordered" evidence="2">
    <location>
        <begin position="1"/>
        <end position="48"/>
    </location>
</feature>
<feature type="compositionally biased region" description="Basic and acidic residues" evidence="2">
    <location>
        <begin position="29"/>
        <end position="42"/>
    </location>
</feature>
<reference key="1">
    <citation type="submission" date="2005-03" db="EMBL/GenBank/DDBJ databases">
        <title>Comparison of the complete genome sequences of Rhodococcus erythropolis PR4 and Rhodococcus opacus B4.</title>
        <authorList>
            <person name="Takarada H."/>
            <person name="Sekine M."/>
            <person name="Hosoyama A."/>
            <person name="Yamada R."/>
            <person name="Fujisawa T."/>
            <person name="Omata S."/>
            <person name="Shimizu A."/>
            <person name="Tsukatani N."/>
            <person name="Tanikawa S."/>
            <person name="Fujita N."/>
            <person name="Harayama S."/>
        </authorList>
    </citation>
    <scope>NUCLEOTIDE SEQUENCE [LARGE SCALE GENOMIC DNA]</scope>
    <source>
        <strain>PR4 / NBRC 100887</strain>
    </source>
</reference>
<organism>
    <name type="scientific">Rhodococcus erythropolis (strain PR4 / NBRC 100887)</name>
    <dbReference type="NCBI Taxonomy" id="234621"/>
    <lineage>
        <taxon>Bacteria</taxon>
        <taxon>Bacillati</taxon>
        <taxon>Actinomycetota</taxon>
        <taxon>Actinomycetes</taxon>
        <taxon>Mycobacteriales</taxon>
        <taxon>Nocardiaceae</taxon>
        <taxon>Rhodococcus</taxon>
        <taxon>Rhodococcus erythropolis group</taxon>
    </lineage>
</organism>
<proteinExistence type="inferred from homology"/>
<keyword id="KW-0687">Ribonucleoprotein</keyword>
<keyword id="KW-0689">Ribosomal protein</keyword>
<keyword id="KW-0694">RNA-binding</keyword>
<keyword id="KW-0699">rRNA-binding</keyword>
<gene>
    <name evidence="1" type="primary">rpsE</name>
    <name type="ordered locus">RER_18700</name>
</gene>
<protein>
    <recommendedName>
        <fullName evidence="1">Small ribosomal subunit protein uS5</fullName>
    </recommendedName>
    <alternativeName>
        <fullName evidence="3">30S ribosomal protein S5</fullName>
    </alternativeName>
</protein>
<accession>C0ZW43</accession>
<name>RS5_RHOE4</name>
<evidence type="ECO:0000255" key="1">
    <source>
        <dbReference type="HAMAP-Rule" id="MF_01307"/>
    </source>
</evidence>
<evidence type="ECO:0000256" key="2">
    <source>
        <dbReference type="SAM" id="MobiDB-lite"/>
    </source>
</evidence>
<evidence type="ECO:0000305" key="3"/>